<keyword id="KW-0903">Direct protein sequencing</keyword>
<keyword id="KW-1015">Disulfide bond</keyword>
<keyword id="KW-0872">Ion channel impairing toxin</keyword>
<keyword id="KW-0166">Nematocyst</keyword>
<keyword id="KW-0632">Potassium channel impairing toxin</keyword>
<keyword id="KW-0964">Secreted</keyword>
<keyword id="KW-0800">Toxin</keyword>
<keyword id="KW-1220">Voltage-gated potassium channel impairing toxin</keyword>
<dbReference type="SMR" id="C0HJD9"/>
<dbReference type="GO" id="GO:0005576">
    <property type="term" value="C:extracellular region"/>
    <property type="evidence" value="ECO:0007669"/>
    <property type="project" value="UniProtKB-SubCell"/>
</dbReference>
<dbReference type="GO" id="GO:0042151">
    <property type="term" value="C:nematocyst"/>
    <property type="evidence" value="ECO:0007669"/>
    <property type="project" value="UniProtKB-SubCell"/>
</dbReference>
<dbReference type="GO" id="GO:0015459">
    <property type="term" value="F:potassium channel regulator activity"/>
    <property type="evidence" value="ECO:0007669"/>
    <property type="project" value="UniProtKB-KW"/>
</dbReference>
<dbReference type="GO" id="GO:0090729">
    <property type="term" value="F:toxin activity"/>
    <property type="evidence" value="ECO:0007669"/>
    <property type="project" value="UniProtKB-KW"/>
</dbReference>
<name>K6TX1_ACTBE</name>
<comment type="function">
    <text evidence="1">Potassium channel inhibitor that is the most potent on Kv1.1/KCNA1 (IC(50)=671.95 nM), Kv1.2/KCNA2 (IC(50)=167.36 nM), and Kv1.6/KCNA6 (IC(50)=115.68 nM), and less potent on Kv1.3/KCNA3 (20% inhibition at 3 uM) and on shaker IR (15% inhibition at 3 uM). It inhibits potassium currents, not only by blocking the potassium current of Kv1.2/KCNA2, but by altering the energetics of activation of Kv1.1/KCNA1 and Kv1.6/KCNA6.</text>
</comment>
<comment type="subcellular location">
    <subcellularLocation>
        <location>Secreted</location>
    </subcellularLocation>
    <subcellularLocation>
        <location evidence="1">Nematocyst</location>
    </subcellularLocation>
</comment>
<comment type="domain">
    <text evidence="3">Has the structural arrangement of two alpha-helices stabilized by disulfide bonds (CSalpha/alpha 2(S-S)).</text>
</comment>
<comment type="mass spectrometry"/>
<comment type="miscellaneous">
    <text evidence="1">Negative results: does not show effect on rNav1.2/SCN2A, rNav1.4/SCN4A and B.germanica Nav1 (BgNav1), rKv1.4/KCNA4, rKv1.5/KCNA4, rKv2.1/KCNB1, hKv3.1/KCNC1, rKv4.2/KCND2, rKv4.3/KCND2, and hKv11.1/ERG1/HERG (3 uM toxin tested).</text>
</comment>
<comment type="similarity">
    <text evidence="3">Belongs to the sea anemone type 6 potassium channel toxin family.</text>
</comment>
<feature type="peptide" id="PRO_0000445909" description="Potassium channel toxin AbeTx1" evidence="1">
    <location>
        <begin position="1"/>
        <end position="17"/>
    </location>
</feature>
<feature type="site" description="Important residue for binding to potassium channels" evidence="1">
    <location>
        <position position="1"/>
    </location>
</feature>
<feature type="site" description="Key residue important for binding to potassium channels" evidence="1">
    <location>
        <position position="3"/>
    </location>
</feature>
<feature type="site" description="Important residue for binding to potassium channels" evidence="1">
    <location>
        <position position="7"/>
    </location>
</feature>
<feature type="site" description="Important residue for binding to potassium channels" evidence="1">
    <location>
        <position position="9"/>
    </location>
</feature>
<feature type="site" description="Important residue for binding to potassium channels" evidence="1">
    <location>
        <position position="11"/>
    </location>
</feature>
<feature type="site" description="Important residue for binding to potassium channels" evidence="1">
    <location>
        <position position="13"/>
    </location>
</feature>
<feature type="disulfide bond" evidence="1">
    <location>
        <begin position="2"/>
        <end position="16"/>
    </location>
</feature>
<feature type="disulfide bond" evidence="1">
    <location>
        <begin position="5"/>
        <end position="10"/>
    </location>
</feature>
<feature type="mutagenesis site" description="3-fold decrease in potency of inhibition of Kv1.1/KCNA1 and 30-fold decrease in potency of inhibition of Kv1.6/KCNA6." evidence="1">
    <original>R</original>
    <variation>A</variation>
    <location>
        <position position="1"/>
    </location>
</feature>
<feature type="mutagenesis site" description="40-fold decrease in potency of inhibition of Kv1.1/KCNA1 and 160-fold decrease in potency of inhibition of Kv1.6/KCNA6." evidence="1">
    <original>K</original>
    <variation>A</variation>
    <location>
        <position position="3"/>
    </location>
</feature>
<feature type="mutagenesis site" description="26-fold decrease in potency of inhibition of Kv1.1/KCNA1 and 7-fold decrease in potency of inhibition of Kv1.6/KCNA6." evidence="1">
    <original>K</original>
    <variation>A</variation>
    <location>
        <position position="7"/>
    </location>
</feature>
<feature type="mutagenesis site" description="12-fold decrease in potency of inhibition of Kv1.1/KCNA1 and 21-fold decrease in potency of inhibition of Kv1.6/KCNA6." evidence="1">
    <original>R</original>
    <variation>A</variation>
    <location>
        <position position="9"/>
    </location>
</feature>
<feature type="mutagenesis site" description="32-fold decrease in potency of inhibition of Kv1.1/KCNA1 and 7-fold decrease in potency of inhibition of Kv1.6/KCNA6." evidence="1">
    <original>R</original>
    <variation>A</variation>
    <location>
        <position position="11"/>
    </location>
</feature>
<feature type="mutagenesis site" description="7-fold decrease in potency of inhibition of Kv1.1/KCNA1 and 9-fold decrease in potency of inhibition of Kv1.6/KCNA6." evidence="1">
    <original>K</original>
    <variation>A</variation>
    <location>
        <position position="13"/>
    </location>
</feature>
<sequence>RCKTCSKGRCRPKPNCG</sequence>
<protein>
    <recommendedName>
        <fullName evidence="2">Potassium channel toxin AbeTx1</fullName>
    </recommendedName>
</protein>
<accession>C0HJD9</accession>
<organism>
    <name type="scientific">Actinia bermudensis</name>
    <name type="common">Maroon anemone</name>
    <dbReference type="NCBI Taxonomy" id="1078900"/>
    <lineage>
        <taxon>Eukaryota</taxon>
        <taxon>Metazoa</taxon>
        <taxon>Cnidaria</taxon>
        <taxon>Anthozoa</taxon>
        <taxon>Hexacorallia</taxon>
        <taxon>Actiniaria</taxon>
        <taxon>Actiniidae</taxon>
        <taxon>Actinia</taxon>
    </lineage>
</organism>
<reference key="1">
    <citation type="journal article" date="2018" name="Mar. Drugs">
        <title>AbeTx1 is a novel sea anemone toxin with a dual mechanism of action on shaker-type K[+] channels activation.</title>
        <authorList>
            <person name="Orts D.J.B."/>
            <person name="Peigneur S."/>
            <person name="Silva-Goncalves L.C."/>
            <person name="Arcisio-Miranda M."/>
            <person name="Bicudo J.E.P.W."/>
            <person name="Tytgat J."/>
        </authorList>
    </citation>
    <scope>PROTEIN SEQUENCE</scope>
    <scope>FUNCTION</scope>
    <scope>MASS SPECTROMETRY</scope>
    <scope>DISULFIDE BOND</scope>
    <scope>MUTAGENESIS OF LYS-3; LYS-7; ARG-9; ARG-11 AND LYS-13</scope>
    <source>
        <tissue>Nematoblast</tissue>
    </source>
</reference>
<evidence type="ECO:0000269" key="1">
    <source>
    </source>
</evidence>
<evidence type="ECO:0000303" key="2">
    <source>
    </source>
</evidence>
<evidence type="ECO:0000305" key="3">
    <source>
    </source>
</evidence>
<proteinExistence type="evidence at protein level"/>